<evidence type="ECO:0000255" key="1">
    <source>
        <dbReference type="HAMAP-Rule" id="MF_01656"/>
    </source>
</evidence>
<evidence type="ECO:0000305" key="2"/>
<reference key="1">
    <citation type="journal article" date="2004" name="Microbiology">
        <title>Genes for Mn(II)-dependent NahC and Fe(II)-dependent NahH located in close proximity in the thermophilic naphthalene and PCB degrader, Bacillus sp. JF8: cloning and characterization.</title>
        <authorList>
            <person name="Miyazawa D."/>
            <person name="Mukerjee-Dhar G."/>
            <person name="Shimura M."/>
            <person name="Hatta T."/>
            <person name="Kimbara K."/>
        </authorList>
    </citation>
    <scope>NUCLEOTIDE SEQUENCE [GENOMIC DNA]</scope>
    <source>
        <strain>JF8</strain>
    </source>
</reference>
<keyword id="KW-0058">Aromatic hydrocarbons catabolism</keyword>
<keyword id="KW-0456">Lyase</keyword>
<keyword id="KW-0464">Manganese</keyword>
<keyword id="KW-0479">Metal-binding</keyword>
<organism>
    <name type="scientific">Geobacillus genomosp. 3</name>
    <dbReference type="NCBI Taxonomy" id="1921421"/>
    <lineage>
        <taxon>Bacteria</taxon>
        <taxon>Bacillati</taxon>
        <taxon>Bacillota</taxon>
        <taxon>Bacilli</taxon>
        <taxon>Bacillales</taxon>
        <taxon>Anoxybacillaceae</taxon>
        <taxon>Geobacillus</taxon>
    </lineage>
</organism>
<dbReference type="EC" id="4.1.3.39" evidence="1"/>
<dbReference type="EMBL" id="AB116258">
    <property type="protein sequence ID" value="BAD08311.1"/>
    <property type="status" value="ALT_INIT"/>
    <property type="molecule type" value="Genomic_DNA"/>
</dbReference>
<dbReference type="RefSeq" id="WP_071990883.1">
    <property type="nucleotide sequence ID" value="NC_022080.4"/>
</dbReference>
<dbReference type="SMR" id="Q764S0"/>
<dbReference type="STRING" id="1921421.M493_12195"/>
<dbReference type="GO" id="GO:0003852">
    <property type="term" value="F:2-isopropylmalate synthase activity"/>
    <property type="evidence" value="ECO:0007669"/>
    <property type="project" value="TreeGrafter"/>
</dbReference>
<dbReference type="GO" id="GO:0008701">
    <property type="term" value="F:4-hydroxy-2-oxovalerate aldolase activity"/>
    <property type="evidence" value="ECO:0007669"/>
    <property type="project" value="UniProtKB-UniRule"/>
</dbReference>
<dbReference type="GO" id="GO:0030145">
    <property type="term" value="F:manganese ion binding"/>
    <property type="evidence" value="ECO:0007669"/>
    <property type="project" value="UniProtKB-UniRule"/>
</dbReference>
<dbReference type="GO" id="GO:0009056">
    <property type="term" value="P:catabolic process"/>
    <property type="evidence" value="ECO:0007669"/>
    <property type="project" value="UniProtKB-KW"/>
</dbReference>
<dbReference type="GO" id="GO:0009098">
    <property type="term" value="P:L-leucine biosynthetic process"/>
    <property type="evidence" value="ECO:0007669"/>
    <property type="project" value="TreeGrafter"/>
</dbReference>
<dbReference type="CDD" id="cd07943">
    <property type="entry name" value="DRE_TIM_HOA"/>
    <property type="match status" value="1"/>
</dbReference>
<dbReference type="Gene3D" id="1.10.8.60">
    <property type="match status" value="1"/>
</dbReference>
<dbReference type="Gene3D" id="3.20.20.70">
    <property type="entry name" value="Aldolase class I"/>
    <property type="match status" value="1"/>
</dbReference>
<dbReference type="HAMAP" id="MF_01656">
    <property type="entry name" value="HOA"/>
    <property type="match status" value="1"/>
</dbReference>
<dbReference type="InterPro" id="IPR050073">
    <property type="entry name" value="2-IPM_HCS-like"/>
</dbReference>
<dbReference type="InterPro" id="IPR017629">
    <property type="entry name" value="4OH_2_O-val_aldolase"/>
</dbReference>
<dbReference type="InterPro" id="IPR013785">
    <property type="entry name" value="Aldolase_TIM"/>
</dbReference>
<dbReference type="InterPro" id="IPR012425">
    <property type="entry name" value="DmpG_comm"/>
</dbReference>
<dbReference type="InterPro" id="IPR035685">
    <property type="entry name" value="DRE_TIM_HOA"/>
</dbReference>
<dbReference type="InterPro" id="IPR000891">
    <property type="entry name" value="PYR_CT"/>
</dbReference>
<dbReference type="NCBIfam" id="TIGR03217">
    <property type="entry name" value="4OH_2_O_val_ald"/>
    <property type="match status" value="1"/>
</dbReference>
<dbReference type="NCBIfam" id="NF006049">
    <property type="entry name" value="PRK08195.1"/>
    <property type="match status" value="1"/>
</dbReference>
<dbReference type="PANTHER" id="PTHR10277:SF9">
    <property type="entry name" value="2-ISOPROPYLMALATE SYNTHASE 1, CHLOROPLASTIC-RELATED"/>
    <property type="match status" value="1"/>
</dbReference>
<dbReference type="PANTHER" id="PTHR10277">
    <property type="entry name" value="HOMOCITRATE SYNTHASE-RELATED"/>
    <property type="match status" value="1"/>
</dbReference>
<dbReference type="Pfam" id="PF07836">
    <property type="entry name" value="DmpG_comm"/>
    <property type="match status" value="1"/>
</dbReference>
<dbReference type="Pfam" id="PF00682">
    <property type="entry name" value="HMGL-like"/>
    <property type="match status" value="1"/>
</dbReference>
<dbReference type="SUPFAM" id="SSF51569">
    <property type="entry name" value="Aldolase"/>
    <property type="match status" value="1"/>
</dbReference>
<dbReference type="SUPFAM" id="SSF89000">
    <property type="entry name" value="post-HMGL domain-like"/>
    <property type="match status" value="1"/>
</dbReference>
<dbReference type="PROSITE" id="PS50991">
    <property type="entry name" value="PYR_CT"/>
    <property type="match status" value="1"/>
</dbReference>
<name>HOA_GEOG3</name>
<gene>
    <name type="primary">nahM</name>
</gene>
<accession>Q764S0</accession>
<comment type="catalytic activity">
    <reaction evidence="1">
        <text>(S)-4-hydroxy-2-oxopentanoate = acetaldehyde + pyruvate</text>
        <dbReference type="Rhea" id="RHEA:22624"/>
        <dbReference type="ChEBI" id="CHEBI:15343"/>
        <dbReference type="ChEBI" id="CHEBI:15361"/>
        <dbReference type="ChEBI" id="CHEBI:73143"/>
        <dbReference type="EC" id="4.1.3.39"/>
    </reaction>
</comment>
<comment type="similarity">
    <text evidence="1">Belongs to the 4-hydroxy-2-oxovalerate aldolase family.</text>
</comment>
<comment type="sequence caution" evidence="2">
    <conflict type="erroneous initiation">
        <sequence resource="EMBL-CDS" id="BAD08311"/>
    </conflict>
</comment>
<protein>
    <recommendedName>
        <fullName evidence="1">4-hydroxy-2-oxovalerate aldolase</fullName>
        <shortName evidence="1">HOA</shortName>
        <ecNumber evidence="1">4.1.3.39</ecNumber>
    </recommendedName>
    <alternativeName>
        <fullName evidence="1">4-hydroxy-2-keto-pentanoic acid aldolase</fullName>
    </alternativeName>
    <alternativeName>
        <fullName evidence="1">4-hydroxy-2-oxopentanoate aldolase</fullName>
    </alternativeName>
</protein>
<proteinExistence type="inferred from homology"/>
<feature type="chain" id="PRO_0000387789" description="4-hydroxy-2-oxovalerate aldolase">
    <location>
        <begin position="1"/>
        <end position="337"/>
    </location>
</feature>
<feature type="domain" description="Pyruvate carboxyltransferase" evidence="1">
    <location>
        <begin position="6"/>
        <end position="256"/>
    </location>
</feature>
<feature type="active site" description="Proton acceptor" evidence="1">
    <location>
        <position position="18"/>
    </location>
</feature>
<feature type="binding site" evidence="1">
    <location>
        <begin position="14"/>
        <end position="15"/>
    </location>
    <ligand>
        <name>substrate</name>
    </ligand>
</feature>
<feature type="binding site" evidence="1">
    <location>
        <position position="15"/>
    </location>
    <ligand>
        <name>Mn(2+)</name>
        <dbReference type="ChEBI" id="CHEBI:29035"/>
    </ligand>
</feature>
<feature type="binding site" evidence="1">
    <location>
        <position position="168"/>
    </location>
    <ligand>
        <name>substrate</name>
    </ligand>
</feature>
<feature type="binding site" evidence="1">
    <location>
        <position position="195"/>
    </location>
    <ligand>
        <name>Mn(2+)</name>
        <dbReference type="ChEBI" id="CHEBI:29035"/>
    </ligand>
</feature>
<feature type="binding site" evidence="1">
    <location>
        <position position="195"/>
    </location>
    <ligand>
        <name>substrate</name>
    </ligand>
</feature>
<feature type="binding site" evidence="1">
    <location>
        <position position="197"/>
    </location>
    <ligand>
        <name>Mn(2+)</name>
        <dbReference type="ChEBI" id="CHEBI:29035"/>
    </ligand>
</feature>
<feature type="binding site" evidence="1">
    <location>
        <position position="286"/>
    </location>
    <ligand>
        <name>substrate</name>
    </ligand>
</feature>
<feature type="site" description="Transition state stabilizer" evidence="1">
    <location>
        <position position="14"/>
    </location>
</feature>
<sequence length="337" mass="36279">MPKQAIRIMDTTLRDGSHAIRHRFTKENVRQIVQALDEAGVPVIEVSHGDGLGGSSLQYGMSLVEEMELIEEAAKTSRRAKIAALLLPGIGTKKELQQAKDCGIQMVRIATQCSEADVSEQHFGLAKELGLETVGFLMMAHMLSPEELAQQAKLMESYGADIVYIVDSAGTMLPQDVIDRVIALKKVLNVPIGFHAHNNLGLAIGNSLAAIQAGATNIDASTRGLGAGSGNTQTEVLVAVLSRMGIETGIDLFQIMDAAEYIVDPLMDSPMIVNRDALTIGFTGVYSTFLWHAKQAGEKFGVDPREILIELGRRKAVAGQEDWILDVASDLSSAKGR</sequence>